<accession>Q60HI0</accession>
<protein>
    <recommendedName>
        <fullName>Long-chain specific acyl-CoA dehydrogenase, mitochondrial</fullName>
        <shortName>LCAD</shortName>
        <ecNumber evidence="3">1.3.8.8</ecNumber>
    </recommendedName>
</protein>
<reference key="1">
    <citation type="submission" date="2003-10" db="EMBL/GenBank/DDBJ databases">
        <title>Isolation and characterization of cDNA for macaque neurological disease genes.</title>
        <authorList>
            <person name="Kusuda J."/>
            <person name="Osada N."/>
            <person name="Tanuma R."/>
            <person name="Hirata M."/>
            <person name="Sugano S."/>
            <person name="Hashimoto K."/>
        </authorList>
    </citation>
    <scope>NUCLEOTIDE SEQUENCE [LARGE SCALE MRNA]</scope>
    <source>
        <tissue>Temporal cortex</tissue>
    </source>
</reference>
<evidence type="ECO:0000250" key="1">
    <source>
        <dbReference type="UniProtKB" id="P15650"/>
    </source>
</evidence>
<evidence type="ECO:0000250" key="2">
    <source>
        <dbReference type="UniProtKB" id="P26440"/>
    </source>
</evidence>
<evidence type="ECO:0000250" key="3">
    <source>
        <dbReference type="UniProtKB" id="P28330"/>
    </source>
</evidence>
<evidence type="ECO:0000250" key="4">
    <source>
        <dbReference type="UniProtKB" id="P51174"/>
    </source>
</evidence>
<evidence type="ECO:0000305" key="5"/>
<keyword id="KW-0007">Acetylation</keyword>
<keyword id="KW-0274">FAD</keyword>
<keyword id="KW-0276">Fatty acid metabolism</keyword>
<keyword id="KW-0285">Flavoprotein</keyword>
<keyword id="KW-0443">Lipid metabolism</keyword>
<keyword id="KW-0496">Mitochondrion</keyword>
<keyword id="KW-0560">Oxidoreductase</keyword>
<keyword id="KW-0597">Phosphoprotein</keyword>
<keyword id="KW-1185">Reference proteome</keyword>
<keyword id="KW-0809">Transit peptide</keyword>
<gene>
    <name evidence="3" type="primary">ACADL</name>
    <name type="ORF">QtrA-17450</name>
</gene>
<dbReference type="EC" id="1.3.8.8" evidence="3"/>
<dbReference type="EMBL" id="AB125147">
    <property type="protein sequence ID" value="BAD51935.1"/>
    <property type="molecule type" value="mRNA"/>
</dbReference>
<dbReference type="RefSeq" id="NP_001272752.1">
    <property type="nucleotide sequence ID" value="NM_001285823.1"/>
</dbReference>
<dbReference type="RefSeq" id="XP_045223583.2">
    <property type="nucleotide sequence ID" value="XM_045367648.2"/>
</dbReference>
<dbReference type="SMR" id="Q60HI0"/>
<dbReference type="STRING" id="9541.ENSMFAP00000034144"/>
<dbReference type="GeneID" id="102134056"/>
<dbReference type="VEuPathDB" id="HostDB:ENSMFAG00000003569"/>
<dbReference type="eggNOG" id="KOG0141">
    <property type="taxonomic scope" value="Eukaryota"/>
</dbReference>
<dbReference type="OMA" id="MWEYPVA"/>
<dbReference type="UniPathway" id="UPA00660"/>
<dbReference type="Proteomes" id="UP000233100">
    <property type="component" value="Chromosome 12"/>
</dbReference>
<dbReference type="GO" id="GO:0005759">
    <property type="term" value="C:mitochondrial matrix"/>
    <property type="evidence" value="ECO:0007669"/>
    <property type="project" value="UniProtKB-SubCell"/>
</dbReference>
<dbReference type="GO" id="GO:0050660">
    <property type="term" value="F:flavin adenine dinucleotide binding"/>
    <property type="evidence" value="ECO:0007669"/>
    <property type="project" value="InterPro"/>
</dbReference>
<dbReference type="GO" id="GO:0004466">
    <property type="term" value="F:long-chain fatty acyl-CoA dehydrogenase activity"/>
    <property type="evidence" value="ECO:0007669"/>
    <property type="project" value="UniProtKB-EC"/>
</dbReference>
<dbReference type="GO" id="GO:0016401">
    <property type="term" value="F:palmitoyl-CoA oxidase activity"/>
    <property type="evidence" value="ECO:0007669"/>
    <property type="project" value="TreeGrafter"/>
</dbReference>
<dbReference type="GO" id="GO:0019254">
    <property type="term" value="P:carnitine metabolic process, CoA-linked"/>
    <property type="evidence" value="ECO:0007669"/>
    <property type="project" value="TreeGrafter"/>
</dbReference>
<dbReference type="GO" id="GO:0033539">
    <property type="term" value="P:fatty acid beta-oxidation using acyl-CoA dehydrogenase"/>
    <property type="evidence" value="ECO:0007669"/>
    <property type="project" value="TreeGrafter"/>
</dbReference>
<dbReference type="GO" id="GO:0042758">
    <property type="term" value="P:long-chain fatty acid catabolic process"/>
    <property type="evidence" value="ECO:0007669"/>
    <property type="project" value="InterPro"/>
</dbReference>
<dbReference type="CDD" id="cd01160">
    <property type="entry name" value="LCAD"/>
    <property type="match status" value="1"/>
</dbReference>
<dbReference type="FunFam" id="2.40.110.10:FF:000002">
    <property type="entry name" value="Acyl-CoA dehydrogenase fadE12"/>
    <property type="match status" value="1"/>
</dbReference>
<dbReference type="FunFam" id="1.20.140.10:FF:000020">
    <property type="entry name" value="Long-chain specific acyl-CoA dehydrogenase, mitochondrial"/>
    <property type="match status" value="1"/>
</dbReference>
<dbReference type="FunFam" id="1.10.540.10:FF:000017">
    <property type="entry name" value="long-chain specific acyl-CoA dehydrogenase, mitochondrial"/>
    <property type="match status" value="1"/>
</dbReference>
<dbReference type="Gene3D" id="1.10.540.10">
    <property type="entry name" value="Acyl-CoA dehydrogenase/oxidase, N-terminal domain"/>
    <property type="match status" value="1"/>
</dbReference>
<dbReference type="Gene3D" id="2.40.110.10">
    <property type="entry name" value="Butyryl-CoA Dehydrogenase, subunit A, domain 2"/>
    <property type="match status" value="1"/>
</dbReference>
<dbReference type="Gene3D" id="1.20.140.10">
    <property type="entry name" value="Butyryl-CoA Dehydrogenase, subunit A, domain 3"/>
    <property type="match status" value="1"/>
</dbReference>
<dbReference type="InterPro" id="IPR050741">
    <property type="entry name" value="Acyl-CoA_dehydrogenase"/>
</dbReference>
<dbReference type="InterPro" id="IPR006089">
    <property type="entry name" value="Acyl-CoA_DH_CS"/>
</dbReference>
<dbReference type="InterPro" id="IPR006091">
    <property type="entry name" value="Acyl-CoA_Oxase/DH_mid-dom"/>
</dbReference>
<dbReference type="InterPro" id="IPR046373">
    <property type="entry name" value="Acyl-CoA_Oxase/DH_mid-dom_sf"/>
</dbReference>
<dbReference type="InterPro" id="IPR036250">
    <property type="entry name" value="AcylCo_DH-like_C"/>
</dbReference>
<dbReference type="InterPro" id="IPR009075">
    <property type="entry name" value="AcylCo_DH/oxidase_C"/>
</dbReference>
<dbReference type="InterPro" id="IPR013786">
    <property type="entry name" value="AcylCoA_DH/ox_N"/>
</dbReference>
<dbReference type="InterPro" id="IPR037069">
    <property type="entry name" value="AcylCoA_DH/ox_N_sf"/>
</dbReference>
<dbReference type="InterPro" id="IPR009100">
    <property type="entry name" value="AcylCoA_DH/oxidase_NM_dom_sf"/>
</dbReference>
<dbReference type="InterPro" id="IPR034179">
    <property type="entry name" value="LCAD"/>
</dbReference>
<dbReference type="PANTHER" id="PTHR48083:SF20">
    <property type="entry name" value="LONG-CHAIN SPECIFIC ACYL-COA DEHYDROGENASE, MITOCHONDRIAL"/>
    <property type="match status" value="1"/>
</dbReference>
<dbReference type="PANTHER" id="PTHR48083">
    <property type="entry name" value="MEDIUM-CHAIN SPECIFIC ACYL-COA DEHYDROGENASE, MITOCHONDRIAL-RELATED"/>
    <property type="match status" value="1"/>
</dbReference>
<dbReference type="Pfam" id="PF00441">
    <property type="entry name" value="Acyl-CoA_dh_1"/>
    <property type="match status" value="1"/>
</dbReference>
<dbReference type="Pfam" id="PF02770">
    <property type="entry name" value="Acyl-CoA_dh_M"/>
    <property type="match status" value="1"/>
</dbReference>
<dbReference type="Pfam" id="PF02771">
    <property type="entry name" value="Acyl-CoA_dh_N"/>
    <property type="match status" value="1"/>
</dbReference>
<dbReference type="SUPFAM" id="SSF47203">
    <property type="entry name" value="Acyl-CoA dehydrogenase C-terminal domain-like"/>
    <property type="match status" value="1"/>
</dbReference>
<dbReference type="SUPFAM" id="SSF56645">
    <property type="entry name" value="Acyl-CoA dehydrogenase NM domain-like"/>
    <property type="match status" value="1"/>
</dbReference>
<dbReference type="PROSITE" id="PS00072">
    <property type="entry name" value="ACYL_COA_DH_1"/>
    <property type="match status" value="1"/>
</dbReference>
<dbReference type="PROSITE" id="PS00073">
    <property type="entry name" value="ACYL_COA_DH_2"/>
    <property type="match status" value="1"/>
</dbReference>
<feature type="transit peptide" description="Mitochondrion" evidence="1">
    <location>
        <begin position="1"/>
        <end position="30"/>
    </location>
</feature>
<feature type="chain" id="PRO_0000000510" description="Long-chain specific acyl-CoA dehydrogenase, mitochondrial">
    <location>
        <begin position="31"/>
        <end position="430"/>
    </location>
</feature>
<feature type="active site" description="Proton acceptor" evidence="2">
    <location>
        <position position="291"/>
    </location>
</feature>
<feature type="binding site" evidence="2">
    <location>
        <begin position="170"/>
        <end position="179"/>
    </location>
    <ligand>
        <name>FAD</name>
        <dbReference type="ChEBI" id="CHEBI:57692"/>
    </ligand>
</feature>
<feature type="binding site" evidence="2">
    <location>
        <position position="179"/>
    </location>
    <ligand>
        <name>substrate</name>
    </ligand>
</feature>
<feature type="binding site" evidence="2">
    <location>
        <begin position="203"/>
        <end position="205"/>
    </location>
    <ligand>
        <name>FAD</name>
        <dbReference type="ChEBI" id="CHEBI:57692"/>
    </ligand>
</feature>
<feature type="binding site" evidence="2">
    <location>
        <begin position="227"/>
        <end position="228"/>
    </location>
    <ligand>
        <name>substrate</name>
    </ligand>
</feature>
<feature type="binding site" evidence="2">
    <location>
        <position position="282"/>
    </location>
    <ligand>
        <name>substrate</name>
    </ligand>
</feature>
<feature type="binding site" evidence="2">
    <location>
        <begin position="289"/>
        <end position="292"/>
    </location>
    <ligand>
        <name>substrate</name>
    </ligand>
</feature>
<feature type="binding site" evidence="2">
    <location>
        <position position="317"/>
    </location>
    <ligand>
        <name>FAD</name>
        <dbReference type="ChEBI" id="CHEBI:57692"/>
    </ligand>
</feature>
<feature type="binding site" evidence="2">
    <location>
        <position position="328"/>
    </location>
    <ligand>
        <name>FAD</name>
        <dbReference type="ChEBI" id="CHEBI:57692"/>
    </ligand>
</feature>
<feature type="binding site" evidence="2">
    <location>
        <begin position="385"/>
        <end position="389"/>
    </location>
    <ligand>
        <name>FAD</name>
        <dbReference type="ChEBI" id="CHEBI:57692"/>
    </ligand>
</feature>
<feature type="binding site" evidence="2">
    <location>
        <begin position="412"/>
        <end position="413"/>
    </location>
    <ligand>
        <name>substrate</name>
    </ligand>
</feature>
<feature type="binding site" evidence="2">
    <location>
        <begin position="414"/>
        <end position="416"/>
    </location>
    <ligand>
        <name>FAD</name>
        <dbReference type="ChEBI" id="CHEBI:57692"/>
    </ligand>
</feature>
<feature type="modified residue" description="N6-acetyllysine" evidence="4">
    <location>
        <position position="42"/>
    </location>
</feature>
<feature type="modified residue" description="Phosphoserine" evidence="1">
    <location>
        <position position="54"/>
    </location>
</feature>
<feature type="modified residue" description="Phosphoserine" evidence="4">
    <location>
        <position position="55"/>
    </location>
</feature>
<feature type="modified residue" description="N6-acetyllysine; alternate" evidence="4">
    <location>
        <position position="66"/>
    </location>
</feature>
<feature type="modified residue" description="N6-succinyllysine; alternate" evidence="4">
    <location>
        <position position="66"/>
    </location>
</feature>
<feature type="modified residue" description="N6-acetyllysine; alternate" evidence="4">
    <location>
        <position position="81"/>
    </location>
</feature>
<feature type="modified residue" description="N6-succinyllysine; alternate" evidence="4">
    <location>
        <position position="81"/>
    </location>
</feature>
<feature type="modified residue" description="N6-acetyllysine" evidence="4">
    <location>
        <position position="92"/>
    </location>
</feature>
<feature type="modified residue" description="N6-acetyllysine" evidence="4">
    <location>
        <position position="95"/>
    </location>
</feature>
<feature type="modified residue" description="N6-succinyllysine" evidence="4">
    <location>
        <position position="165"/>
    </location>
</feature>
<feature type="modified residue" description="N6-succinyllysine" evidence="4">
    <location>
        <position position="240"/>
    </location>
</feature>
<feature type="modified residue" description="N6-acetyllysine; alternate" evidence="4">
    <location>
        <position position="254"/>
    </location>
</feature>
<feature type="modified residue" description="N6-succinyllysine; alternate" evidence="4">
    <location>
        <position position="254"/>
    </location>
</feature>
<feature type="modified residue" description="N6-acetyllysine; alternate" evidence="4">
    <location>
        <position position="279"/>
    </location>
</feature>
<feature type="modified residue" description="N6-succinyllysine; alternate" evidence="4">
    <location>
        <position position="279"/>
    </location>
</feature>
<feature type="modified residue" description="N6-acetyllysine" evidence="4">
    <location>
        <position position="318"/>
    </location>
</feature>
<feature type="modified residue" description="N6-acetyllysine; alternate" evidence="4">
    <location>
        <position position="322"/>
    </location>
</feature>
<feature type="modified residue" description="N6-succinyllysine; alternate" evidence="4">
    <location>
        <position position="322"/>
    </location>
</feature>
<feature type="modified residue" description="N6-acetyllysine" evidence="4">
    <location>
        <position position="358"/>
    </location>
</feature>
<feature type="modified residue" description="Phosphoserine" evidence="4">
    <location>
        <position position="362"/>
    </location>
</feature>
<comment type="function">
    <text evidence="1 3">Long-chain specific acyl-CoA dehydrogenase is one of the acyl-CoA dehydrogenases that catalyze the first step of mitochondrial fatty acid beta-oxidation, an aerobic process breaking down fatty acids into acetyl-CoA and allowing the production of energy from fats. The first step of fatty acid beta-oxidation consists in the removal of one hydrogen from C-2 and C-3 of the straight-chain fatty acyl-CoA thioester, resulting in the formation of trans-2-enoyl-CoA (By similarity). Among the different mitochondrial acyl-CoA dehydrogenases, long-chain specific acyl-CoA dehydrogenase can act on saturated and unsaturated acyl-CoAs with 6 to 24 carbons with a preference for 8 to 18 carbons long primary chains (By similarity).</text>
</comment>
<comment type="catalytic activity">
    <reaction evidence="3">
        <text>a long-chain 2,3-saturated fatty acyl-CoA + oxidized [electron-transfer flavoprotein] + H(+) = a long-chain (2E)-enoyl-CoA + reduced [electron-transfer flavoprotein]</text>
        <dbReference type="Rhea" id="RHEA:17721"/>
        <dbReference type="Rhea" id="RHEA-COMP:10685"/>
        <dbReference type="Rhea" id="RHEA-COMP:10686"/>
        <dbReference type="ChEBI" id="CHEBI:15378"/>
        <dbReference type="ChEBI" id="CHEBI:57692"/>
        <dbReference type="ChEBI" id="CHEBI:58307"/>
        <dbReference type="ChEBI" id="CHEBI:83721"/>
        <dbReference type="ChEBI" id="CHEBI:83727"/>
        <dbReference type="EC" id="1.3.8.8"/>
    </reaction>
    <physiologicalReaction direction="left-to-right" evidence="3">
        <dbReference type="Rhea" id="RHEA:17722"/>
    </physiologicalReaction>
</comment>
<comment type="catalytic activity">
    <reaction evidence="3">
        <text>hexanoyl-CoA + oxidized [electron-transfer flavoprotein] + H(+) = (2E)-hexenoyl-CoA + reduced [electron-transfer flavoprotein]</text>
        <dbReference type="Rhea" id="RHEA:43464"/>
        <dbReference type="Rhea" id="RHEA-COMP:10685"/>
        <dbReference type="Rhea" id="RHEA-COMP:10686"/>
        <dbReference type="ChEBI" id="CHEBI:15378"/>
        <dbReference type="ChEBI" id="CHEBI:57692"/>
        <dbReference type="ChEBI" id="CHEBI:58307"/>
        <dbReference type="ChEBI" id="CHEBI:62077"/>
        <dbReference type="ChEBI" id="CHEBI:62620"/>
    </reaction>
    <physiologicalReaction direction="left-to-right" evidence="3">
        <dbReference type="Rhea" id="RHEA:43465"/>
    </physiologicalReaction>
</comment>
<comment type="catalytic activity">
    <reaction evidence="3">
        <text>octanoyl-CoA + oxidized [electron-transfer flavoprotein] + H(+) = (2E)-octenoyl-CoA + reduced [electron-transfer flavoprotein]</text>
        <dbReference type="Rhea" id="RHEA:48180"/>
        <dbReference type="Rhea" id="RHEA-COMP:10685"/>
        <dbReference type="Rhea" id="RHEA-COMP:10686"/>
        <dbReference type="ChEBI" id="CHEBI:15378"/>
        <dbReference type="ChEBI" id="CHEBI:57386"/>
        <dbReference type="ChEBI" id="CHEBI:57692"/>
        <dbReference type="ChEBI" id="CHEBI:58307"/>
        <dbReference type="ChEBI" id="CHEBI:62242"/>
    </reaction>
    <physiologicalReaction direction="left-to-right" evidence="3">
        <dbReference type="Rhea" id="RHEA:48181"/>
    </physiologicalReaction>
</comment>
<comment type="catalytic activity">
    <reaction evidence="3">
        <text>decanoyl-CoA + oxidized [electron-transfer flavoprotein] + H(+) = (2E)-decenoyl-CoA + reduced [electron-transfer flavoprotein]</text>
        <dbReference type="Rhea" id="RHEA:48176"/>
        <dbReference type="Rhea" id="RHEA-COMP:10685"/>
        <dbReference type="Rhea" id="RHEA-COMP:10686"/>
        <dbReference type="ChEBI" id="CHEBI:15378"/>
        <dbReference type="ChEBI" id="CHEBI:57692"/>
        <dbReference type="ChEBI" id="CHEBI:58307"/>
        <dbReference type="ChEBI" id="CHEBI:61406"/>
        <dbReference type="ChEBI" id="CHEBI:61430"/>
    </reaction>
    <physiologicalReaction direction="left-to-right" evidence="3">
        <dbReference type="Rhea" id="RHEA:48177"/>
    </physiologicalReaction>
</comment>
<comment type="catalytic activity">
    <reaction evidence="3">
        <text>dodecanoyl-CoA + oxidized [electron-transfer flavoprotein] + H(+) = (2E)-dodecenoyl-CoA + reduced [electron-transfer flavoprotein]</text>
        <dbReference type="Rhea" id="RHEA:47296"/>
        <dbReference type="Rhea" id="RHEA-COMP:10685"/>
        <dbReference type="Rhea" id="RHEA-COMP:10686"/>
        <dbReference type="ChEBI" id="CHEBI:15378"/>
        <dbReference type="ChEBI" id="CHEBI:57330"/>
        <dbReference type="ChEBI" id="CHEBI:57375"/>
        <dbReference type="ChEBI" id="CHEBI:57692"/>
        <dbReference type="ChEBI" id="CHEBI:58307"/>
    </reaction>
    <physiologicalReaction direction="left-to-right" evidence="3">
        <dbReference type="Rhea" id="RHEA:47297"/>
    </physiologicalReaction>
</comment>
<comment type="catalytic activity">
    <reaction evidence="3">
        <text>tetradecanoyl-CoA + oxidized [electron-transfer flavoprotein] + H(+) = (2E)-tetradecenoyl-CoA + reduced [electron-transfer flavoprotein]</text>
        <dbReference type="Rhea" id="RHEA:47316"/>
        <dbReference type="Rhea" id="RHEA-COMP:10685"/>
        <dbReference type="Rhea" id="RHEA-COMP:10686"/>
        <dbReference type="ChEBI" id="CHEBI:15378"/>
        <dbReference type="ChEBI" id="CHEBI:57385"/>
        <dbReference type="ChEBI" id="CHEBI:57692"/>
        <dbReference type="ChEBI" id="CHEBI:58307"/>
        <dbReference type="ChEBI" id="CHEBI:61405"/>
    </reaction>
    <physiologicalReaction direction="left-to-right" evidence="3">
        <dbReference type="Rhea" id="RHEA:47317"/>
    </physiologicalReaction>
</comment>
<comment type="catalytic activity">
    <reaction evidence="3">
        <text>oxidized [electron-transfer flavoprotein] + hexadecanoyl-CoA + H(+) = (2E)-hexadecenoyl-CoA + reduced [electron-transfer flavoprotein]</text>
        <dbReference type="Rhea" id="RHEA:43448"/>
        <dbReference type="Rhea" id="RHEA-COMP:10685"/>
        <dbReference type="Rhea" id="RHEA-COMP:10686"/>
        <dbReference type="ChEBI" id="CHEBI:15378"/>
        <dbReference type="ChEBI" id="CHEBI:57379"/>
        <dbReference type="ChEBI" id="CHEBI:57692"/>
        <dbReference type="ChEBI" id="CHEBI:58307"/>
        <dbReference type="ChEBI" id="CHEBI:61526"/>
    </reaction>
    <physiologicalReaction direction="left-to-right" evidence="3">
        <dbReference type="Rhea" id="RHEA:43449"/>
    </physiologicalReaction>
</comment>
<comment type="catalytic activity">
    <reaction evidence="3">
        <text>octadecanoyl-CoA + oxidized [electron-transfer flavoprotein] + H(+) = (2E)-octadecenoyl-CoA + reduced [electron-transfer flavoprotein]</text>
        <dbReference type="Rhea" id="RHEA:47240"/>
        <dbReference type="Rhea" id="RHEA-COMP:10685"/>
        <dbReference type="Rhea" id="RHEA-COMP:10686"/>
        <dbReference type="ChEBI" id="CHEBI:15378"/>
        <dbReference type="ChEBI" id="CHEBI:57394"/>
        <dbReference type="ChEBI" id="CHEBI:57692"/>
        <dbReference type="ChEBI" id="CHEBI:58307"/>
        <dbReference type="ChEBI" id="CHEBI:71412"/>
    </reaction>
    <physiologicalReaction direction="left-to-right" evidence="3">
        <dbReference type="Rhea" id="RHEA:47241"/>
    </physiologicalReaction>
</comment>
<comment type="catalytic activity">
    <reaction evidence="3">
        <text>eicosanoyl-CoA + oxidized [electron-transfer flavoprotein] + H(+) = (2E)-eicosenoyl-CoA + reduced [electron-transfer flavoprotein]</text>
        <dbReference type="Rhea" id="RHEA:47236"/>
        <dbReference type="Rhea" id="RHEA-COMP:10685"/>
        <dbReference type="Rhea" id="RHEA-COMP:10686"/>
        <dbReference type="ChEBI" id="CHEBI:15378"/>
        <dbReference type="ChEBI" id="CHEBI:57380"/>
        <dbReference type="ChEBI" id="CHEBI:57692"/>
        <dbReference type="ChEBI" id="CHEBI:58307"/>
        <dbReference type="ChEBI" id="CHEBI:74691"/>
    </reaction>
    <physiologicalReaction direction="left-to-right" evidence="3">
        <dbReference type="Rhea" id="RHEA:47237"/>
    </physiologicalReaction>
</comment>
<comment type="catalytic activity">
    <reaction evidence="3">
        <text>docosanoyl-CoA + oxidized [electron-transfer flavoprotein] + H(+) = (2E)-docosenoyl-CoA + reduced [electron-transfer flavoprotein]</text>
        <dbReference type="Rhea" id="RHEA:47228"/>
        <dbReference type="Rhea" id="RHEA-COMP:10685"/>
        <dbReference type="Rhea" id="RHEA-COMP:10686"/>
        <dbReference type="ChEBI" id="CHEBI:15378"/>
        <dbReference type="ChEBI" id="CHEBI:57692"/>
        <dbReference type="ChEBI" id="CHEBI:58307"/>
        <dbReference type="ChEBI" id="CHEBI:65059"/>
        <dbReference type="ChEBI" id="CHEBI:74692"/>
    </reaction>
    <physiologicalReaction direction="left-to-right" evidence="3">
        <dbReference type="Rhea" id="RHEA:47229"/>
    </physiologicalReaction>
</comment>
<comment type="catalytic activity">
    <reaction evidence="3">
        <text>tetracosanoyl-CoA + oxidized [electron-transfer flavoprotein] + H(+) = (2E)-tetracosenoyl-CoA + reduced [electron-transfer flavoprotein]</text>
        <dbReference type="Rhea" id="RHEA:47232"/>
        <dbReference type="Rhea" id="RHEA-COMP:10685"/>
        <dbReference type="Rhea" id="RHEA-COMP:10686"/>
        <dbReference type="ChEBI" id="CHEBI:15378"/>
        <dbReference type="ChEBI" id="CHEBI:57692"/>
        <dbReference type="ChEBI" id="CHEBI:58307"/>
        <dbReference type="ChEBI" id="CHEBI:65052"/>
        <dbReference type="ChEBI" id="CHEBI:74693"/>
    </reaction>
    <physiologicalReaction direction="left-to-right" evidence="3">
        <dbReference type="Rhea" id="RHEA:47233"/>
    </physiologicalReaction>
</comment>
<comment type="catalytic activity">
    <reaction evidence="1">
        <text>(5E)-tetradecenoyl-CoA + oxidized [electron-transfer flavoprotein] + H(+) = (2E,5E)-tetradecadienoyl-CoA + reduced [electron-transfer flavoprotein]</text>
        <dbReference type="Rhea" id="RHEA:49828"/>
        <dbReference type="Rhea" id="RHEA-COMP:10685"/>
        <dbReference type="Rhea" id="RHEA-COMP:10686"/>
        <dbReference type="ChEBI" id="CHEBI:15378"/>
        <dbReference type="ChEBI" id="CHEBI:57692"/>
        <dbReference type="ChEBI" id="CHEBI:58307"/>
        <dbReference type="ChEBI" id="CHEBI:131943"/>
        <dbReference type="ChEBI" id="CHEBI:131944"/>
    </reaction>
    <physiologicalReaction direction="left-to-right" evidence="1">
        <dbReference type="Rhea" id="RHEA:49829"/>
    </physiologicalReaction>
</comment>
<comment type="catalytic activity">
    <reaction evidence="1">
        <text>(5Z)-tetradecenoyl-CoA + oxidized [electron-transfer flavoprotein] + H(+) = (2E,5Z)-tetradecadienoyl-CoA + reduced [electron-transfer flavoprotein]</text>
        <dbReference type="Rhea" id="RHEA:47448"/>
        <dbReference type="Rhea" id="RHEA-COMP:10685"/>
        <dbReference type="Rhea" id="RHEA-COMP:10686"/>
        <dbReference type="ChEBI" id="CHEBI:15378"/>
        <dbReference type="ChEBI" id="CHEBI:57692"/>
        <dbReference type="ChEBI" id="CHEBI:58307"/>
        <dbReference type="ChEBI" id="CHEBI:84650"/>
        <dbReference type="ChEBI" id="CHEBI:87701"/>
    </reaction>
    <physiologicalReaction direction="left-to-right" evidence="1">
        <dbReference type="Rhea" id="RHEA:47449"/>
    </physiologicalReaction>
</comment>
<comment type="catalytic activity">
    <reaction evidence="1">
        <text>oxidized [electron-transfer flavoprotein] + (9Z)-octadecenoyl-CoA + H(+) = (2E,9Z)-octadecadienoyl-CoA + reduced [electron-transfer flavoprotein]</text>
        <dbReference type="Rhea" id="RHEA:47300"/>
        <dbReference type="Rhea" id="RHEA-COMP:10685"/>
        <dbReference type="Rhea" id="RHEA-COMP:10686"/>
        <dbReference type="ChEBI" id="CHEBI:15378"/>
        <dbReference type="ChEBI" id="CHEBI:57387"/>
        <dbReference type="ChEBI" id="CHEBI:57692"/>
        <dbReference type="ChEBI" id="CHEBI:58307"/>
        <dbReference type="ChEBI" id="CHEBI:77553"/>
    </reaction>
    <physiologicalReaction direction="left-to-right" evidence="1">
        <dbReference type="Rhea" id="RHEA:47301"/>
    </physiologicalReaction>
</comment>
<comment type="cofactor">
    <cofactor evidence="1">
        <name>FAD</name>
        <dbReference type="ChEBI" id="CHEBI:57692"/>
    </cofactor>
</comment>
<comment type="pathway">
    <text evidence="1">Lipid metabolism; mitochondrial fatty acid beta-oxidation.</text>
</comment>
<comment type="subunit">
    <text evidence="1">Homotetramer.</text>
</comment>
<comment type="subcellular location">
    <subcellularLocation>
        <location evidence="1">Mitochondrion matrix</location>
    </subcellularLocation>
</comment>
<comment type="PTM">
    <text evidence="4">Acetylation at Lys-318 and Lys-322 in proximity of the cofactor-binding sites strongly reduces catalytic activity. These sites are deacetylated by SIRT3.</text>
</comment>
<comment type="similarity">
    <text evidence="5">Belongs to the acyl-CoA dehydrogenase family.</text>
</comment>
<proteinExistence type="evidence at transcript level"/>
<sequence length="430" mass="47838">MAARLLRGSLRFLGGHCAARPLPALRCSHSGGEERLETPSAKNLTDIGIRRIFSSEHDIFRKSIRKFFQEEVIPHHSEWEKAGEVSREVWEKAGKQGLLGVNIAEHLGGIGGDLYYAAVVWEEQAYSNCSGPGFSVHSGIVMSYITNYGSEEQIKHFIPQMTAGKCIGAIAMTELGAGSDLQGIKTNAKKDGSDWILNGSKVFISNGWLSDVVIVVAVTNHEAPSPARGISLFLVENGMKGFIKGRKLHKMGLKAQDTAELFFEDVRLPASALLGEENKGFYYIMKELPQERLLIADMAVSASEFMFEETRNYVKQRKAFGKTVAHLQTVQHKLAELKTHICVTRAFVDNCLQLHEAKRLDSATACMAKYWASELQNSVAYDCVQLHGGWGYMWEYPIAKAYVDARVQPIYGGTNEIMKELIAREIVFDK</sequence>
<organism>
    <name type="scientific">Macaca fascicularis</name>
    <name type="common">Crab-eating macaque</name>
    <name type="synonym">Cynomolgus monkey</name>
    <dbReference type="NCBI Taxonomy" id="9541"/>
    <lineage>
        <taxon>Eukaryota</taxon>
        <taxon>Metazoa</taxon>
        <taxon>Chordata</taxon>
        <taxon>Craniata</taxon>
        <taxon>Vertebrata</taxon>
        <taxon>Euteleostomi</taxon>
        <taxon>Mammalia</taxon>
        <taxon>Eutheria</taxon>
        <taxon>Euarchontoglires</taxon>
        <taxon>Primates</taxon>
        <taxon>Haplorrhini</taxon>
        <taxon>Catarrhini</taxon>
        <taxon>Cercopithecidae</taxon>
        <taxon>Cercopithecinae</taxon>
        <taxon>Macaca</taxon>
    </lineage>
</organism>
<name>ACADL_MACFA</name>